<keyword id="KW-0963">Cytoplasm</keyword>
<keyword id="KW-0378">Hydrolase</keyword>
<keyword id="KW-1185">Reference proteome</keyword>
<gene>
    <name evidence="1" type="primary">ureA</name>
    <name type="ordered locus">NGR_c25050</name>
</gene>
<name>URE3_SINFN</name>
<comment type="catalytic activity">
    <reaction evidence="1">
        <text>urea + 2 H2O + H(+) = hydrogencarbonate + 2 NH4(+)</text>
        <dbReference type="Rhea" id="RHEA:20557"/>
        <dbReference type="ChEBI" id="CHEBI:15377"/>
        <dbReference type="ChEBI" id="CHEBI:15378"/>
        <dbReference type="ChEBI" id="CHEBI:16199"/>
        <dbReference type="ChEBI" id="CHEBI:17544"/>
        <dbReference type="ChEBI" id="CHEBI:28938"/>
        <dbReference type="EC" id="3.5.1.5"/>
    </reaction>
</comment>
<comment type="pathway">
    <text evidence="1">Nitrogen metabolism; urea degradation; CO(2) and NH(3) from urea (urease route): step 1/1.</text>
</comment>
<comment type="subunit">
    <text evidence="1">Heterotrimer of UreA (gamma), UreB (beta) and UreC (alpha) subunits. Three heterotrimers associate to form the active enzyme.</text>
</comment>
<comment type="subcellular location">
    <subcellularLocation>
        <location evidence="1">Cytoplasm</location>
    </subcellularLocation>
</comment>
<comment type="similarity">
    <text evidence="1">Belongs to the urease gamma subunit family.</text>
</comment>
<accession>C3MGX6</accession>
<proteinExistence type="inferred from homology"/>
<dbReference type="EC" id="3.5.1.5" evidence="1"/>
<dbReference type="EMBL" id="CP001389">
    <property type="protein sequence ID" value="ACP26262.1"/>
    <property type="molecule type" value="Genomic_DNA"/>
</dbReference>
<dbReference type="RefSeq" id="WP_012066611.1">
    <property type="nucleotide sequence ID" value="NC_012587.1"/>
</dbReference>
<dbReference type="RefSeq" id="YP_002827015.1">
    <property type="nucleotide sequence ID" value="NC_012587.1"/>
</dbReference>
<dbReference type="SMR" id="C3MGX6"/>
<dbReference type="STRING" id="394.NGR_c25050"/>
<dbReference type="KEGG" id="rhi:NGR_c25050"/>
<dbReference type="PATRIC" id="fig|394.7.peg.5326"/>
<dbReference type="eggNOG" id="COG0831">
    <property type="taxonomic scope" value="Bacteria"/>
</dbReference>
<dbReference type="HOGENOM" id="CLU_145825_1_0_5"/>
<dbReference type="OrthoDB" id="9797217at2"/>
<dbReference type="UniPathway" id="UPA00258">
    <property type="reaction ID" value="UER00370"/>
</dbReference>
<dbReference type="Proteomes" id="UP000001054">
    <property type="component" value="Chromosome"/>
</dbReference>
<dbReference type="GO" id="GO:0005737">
    <property type="term" value="C:cytoplasm"/>
    <property type="evidence" value="ECO:0007669"/>
    <property type="project" value="UniProtKB-SubCell"/>
</dbReference>
<dbReference type="GO" id="GO:0016151">
    <property type="term" value="F:nickel cation binding"/>
    <property type="evidence" value="ECO:0007669"/>
    <property type="project" value="InterPro"/>
</dbReference>
<dbReference type="GO" id="GO:0009039">
    <property type="term" value="F:urease activity"/>
    <property type="evidence" value="ECO:0007669"/>
    <property type="project" value="UniProtKB-UniRule"/>
</dbReference>
<dbReference type="GO" id="GO:0043419">
    <property type="term" value="P:urea catabolic process"/>
    <property type="evidence" value="ECO:0007669"/>
    <property type="project" value="UniProtKB-UniRule"/>
</dbReference>
<dbReference type="CDD" id="cd00390">
    <property type="entry name" value="Urease_gamma"/>
    <property type="match status" value="1"/>
</dbReference>
<dbReference type="Gene3D" id="3.30.280.10">
    <property type="entry name" value="Urease, gamma-like subunit"/>
    <property type="match status" value="1"/>
</dbReference>
<dbReference type="HAMAP" id="MF_00739">
    <property type="entry name" value="Urease_gamma"/>
    <property type="match status" value="1"/>
</dbReference>
<dbReference type="InterPro" id="IPR012010">
    <property type="entry name" value="Urease_gamma"/>
</dbReference>
<dbReference type="InterPro" id="IPR002026">
    <property type="entry name" value="Urease_gamma/gamma-beta_su"/>
</dbReference>
<dbReference type="InterPro" id="IPR036463">
    <property type="entry name" value="Urease_gamma_sf"/>
</dbReference>
<dbReference type="InterPro" id="IPR050069">
    <property type="entry name" value="Urease_subunit"/>
</dbReference>
<dbReference type="NCBIfam" id="NF009712">
    <property type="entry name" value="PRK13241.1"/>
    <property type="match status" value="1"/>
</dbReference>
<dbReference type="NCBIfam" id="TIGR00193">
    <property type="entry name" value="urease_gam"/>
    <property type="match status" value="1"/>
</dbReference>
<dbReference type="PANTHER" id="PTHR33569">
    <property type="entry name" value="UREASE"/>
    <property type="match status" value="1"/>
</dbReference>
<dbReference type="PANTHER" id="PTHR33569:SF1">
    <property type="entry name" value="UREASE"/>
    <property type="match status" value="1"/>
</dbReference>
<dbReference type="Pfam" id="PF00547">
    <property type="entry name" value="Urease_gamma"/>
    <property type="match status" value="1"/>
</dbReference>
<dbReference type="PIRSF" id="PIRSF001223">
    <property type="entry name" value="Urease_gamma"/>
    <property type="match status" value="1"/>
</dbReference>
<dbReference type="SUPFAM" id="SSF54111">
    <property type="entry name" value="Urease, gamma-subunit"/>
    <property type="match status" value="1"/>
</dbReference>
<protein>
    <recommendedName>
        <fullName evidence="1">Urease subunit gamma</fullName>
        <ecNumber evidence="1">3.5.1.5</ecNumber>
    </recommendedName>
    <alternativeName>
        <fullName evidence="1">Urea amidohydrolase subunit gamma</fullName>
    </alternativeName>
</protein>
<organism>
    <name type="scientific">Sinorhizobium fredii (strain NBRC 101917 / NGR234)</name>
    <dbReference type="NCBI Taxonomy" id="394"/>
    <lineage>
        <taxon>Bacteria</taxon>
        <taxon>Pseudomonadati</taxon>
        <taxon>Pseudomonadota</taxon>
        <taxon>Alphaproteobacteria</taxon>
        <taxon>Hyphomicrobiales</taxon>
        <taxon>Rhizobiaceae</taxon>
        <taxon>Sinorhizobium/Ensifer group</taxon>
        <taxon>Sinorhizobium</taxon>
    </lineage>
</organism>
<feature type="chain" id="PRO_1000199880" description="Urease subunit gamma">
    <location>
        <begin position="1"/>
        <end position="100"/>
    </location>
</feature>
<reference key="1">
    <citation type="journal article" date="2009" name="Appl. Environ. Microbiol.">
        <title>Rhizobium sp. strain NGR234 possesses a remarkable number of secretion systems.</title>
        <authorList>
            <person name="Schmeisser C."/>
            <person name="Liesegang H."/>
            <person name="Krysciak D."/>
            <person name="Bakkou N."/>
            <person name="Le Quere A."/>
            <person name="Wollherr A."/>
            <person name="Heinemeyer I."/>
            <person name="Morgenstern B."/>
            <person name="Pommerening-Roeser A."/>
            <person name="Flores M."/>
            <person name="Palacios R."/>
            <person name="Brenner S."/>
            <person name="Gottschalk G."/>
            <person name="Schmitz R.A."/>
            <person name="Broughton W.J."/>
            <person name="Perret X."/>
            <person name="Strittmatter A.W."/>
            <person name="Streit W.R."/>
        </authorList>
    </citation>
    <scope>NUCLEOTIDE SEQUENCE [LARGE SCALE GENOMIC DNA]</scope>
    <source>
        <strain>NBRC 101917 / NGR234</strain>
    </source>
</reference>
<sequence length="100" mass="11142">MNLTPREKDKLLISMAAMVARRRLERGVKLNHPEAIALITDFVVEGARDGRSVAELMEAGAHVLTRDQVMEGIAEMIHDIQIEATFPDGTKLVTVHEPIR</sequence>
<evidence type="ECO:0000255" key="1">
    <source>
        <dbReference type="HAMAP-Rule" id="MF_00739"/>
    </source>
</evidence>